<accession>A3DE44</accession>
<keyword id="KW-0963">Cytoplasm</keyword>
<keyword id="KW-0342">GTP-binding</keyword>
<keyword id="KW-0396">Initiation factor</keyword>
<keyword id="KW-0547">Nucleotide-binding</keyword>
<keyword id="KW-0648">Protein biosynthesis</keyword>
<keyword id="KW-1185">Reference proteome</keyword>
<organism>
    <name type="scientific">Acetivibrio thermocellus (strain ATCC 27405 / DSM 1237 / JCM 9322 / NBRC 103400 / NCIMB 10682 / NRRL B-4536 / VPI 7372)</name>
    <name type="common">Clostridium thermocellum</name>
    <dbReference type="NCBI Taxonomy" id="203119"/>
    <lineage>
        <taxon>Bacteria</taxon>
        <taxon>Bacillati</taxon>
        <taxon>Bacillota</taxon>
        <taxon>Clostridia</taxon>
        <taxon>Eubacteriales</taxon>
        <taxon>Oscillospiraceae</taxon>
        <taxon>Acetivibrio</taxon>
    </lineage>
</organism>
<sequence>MAKKRVYELAKELNTTSKRLMEKLEEINIVVKNHMSFLEEDELEALYDHIGVIRHKDDKSNTDDNKTASAHSVAQHSSEAMKELKKEAKKAPRIIRTTEIYLDSKDEEIKEIKANDAKSQKKPEEKRKKNDFVRVETETSGLRPGLVRETKPEYMRILEEQKKSEASKAQTNEKKDAEKNSVKEVVKKEEGSKQTAEIKDGSVNMEGKVLEEVKATVADSATNVNLNESIDKDKKTNDNRQVSTDNSAVNNEENAADTLNKKDMDKKNNNKKNEAKKNAEKKNEAKKNEKNDNKGGNAKKNEHRSPDMKKNDSNRPQDANKQNSKAAADKNREEGRTGSKKSLEIPKVELTTSQKEEFNSQRAERREYNKDAEKDSKRELRKEQPRSAISGGRNKNHKVIKNVFNSRKGVSEVLSDDFEMDDFYFGGSKKSRKIKKKKEEKKEEKPAPPKPVVTSIKIAAPITVKELAEALKKTSAEVIKKLMSLGIMATLNQELDFDTAAIVADEFGVKAEEEVVVNEEDILFDDSDDPNDPEAVPRPPVVVVMGHVDHGKTSLLDAIKKTNVTEKEAGGITQHIGAYMVKINNRNITFLDTPGHEAFTAMRARGAQVTDIAVLVVAADDGVMPQTIEAINHAKAANVTIIVAINKIDKPTANPEKVKQELTEYGLIPEEWGGDTIFVEVSAKKGVNIDYLLEMILLAADMLELKANPNKQAKGTVIEAKLDKDKGPVATVLVQRGTLCVGDSIIVGTTTGRIRAMTDDKGHRIKKAGPSTPVEILGLHEVPEAGETFYVITDEKTAKQLIEKRKLKQREQLLKASARVTLDDLFNQIKEGKVKELNIIVKADVQGSVEALKQSLEKLSNDEVRVKIIHGGVGSVTETDVTLAQVSNAIIIGFNVRPPANVIDAAKKAGVDLRLYTIIYNAIEDIEAAMKGMLEPTYKEVVIGHVEIRQIFKVSGVGTVGGGYVTDGKITRNANIRLVRDGIVVHEGKLGSLKRFKDDVREVAEGYECGLSIEKFNDIKEGDVVEVYVMEEVKE</sequence>
<protein>
    <recommendedName>
        <fullName evidence="2">Translation initiation factor IF-2</fullName>
    </recommendedName>
</protein>
<name>IF2_ACET2</name>
<evidence type="ECO:0000250" key="1"/>
<evidence type="ECO:0000255" key="2">
    <source>
        <dbReference type="HAMAP-Rule" id="MF_00100"/>
    </source>
</evidence>
<evidence type="ECO:0000256" key="3">
    <source>
        <dbReference type="SAM" id="MobiDB-lite"/>
    </source>
</evidence>
<proteinExistence type="inferred from homology"/>
<feature type="chain" id="PRO_1000057653" description="Translation initiation factor IF-2">
    <location>
        <begin position="1"/>
        <end position="1035"/>
    </location>
</feature>
<feature type="domain" description="tr-type G">
    <location>
        <begin position="537"/>
        <end position="706"/>
    </location>
</feature>
<feature type="region of interest" description="Disordered" evidence="3">
    <location>
        <begin position="56"/>
        <end position="80"/>
    </location>
</feature>
<feature type="region of interest" description="Disordered" evidence="3">
    <location>
        <begin position="114"/>
        <end position="402"/>
    </location>
</feature>
<feature type="region of interest" description="G1" evidence="1">
    <location>
        <begin position="546"/>
        <end position="553"/>
    </location>
</feature>
<feature type="region of interest" description="G2" evidence="1">
    <location>
        <begin position="571"/>
        <end position="575"/>
    </location>
</feature>
<feature type="region of interest" description="G3" evidence="1">
    <location>
        <begin position="592"/>
        <end position="595"/>
    </location>
</feature>
<feature type="region of interest" description="G4" evidence="1">
    <location>
        <begin position="646"/>
        <end position="649"/>
    </location>
</feature>
<feature type="region of interest" description="G5" evidence="1">
    <location>
        <begin position="682"/>
        <end position="684"/>
    </location>
</feature>
<feature type="compositionally biased region" description="Basic and acidic residues" evidence="3">
    <location>
        <begin position="56"/>
        <end position="66"/>
    </location>
</feature>
<feature type="compositionally biased region" description="Polar residues" evidence="3">
    <location>
        <begin position="68"/>
        <end position="78"/>
    </location>
</feature>
<feature type="compositionally biased region" description="Basic and acidic residues" evidence="3">
    <location>
        <begin position="114"/>
        <end position="137"/>
    </location>
</feature>
<feature type="compositionally biased region" description="Basic and acidic residues" evidence="3">
    <location>
        <begin position="146"/>
        <end position="200"/>
    </location>
</feature>
<feature type="compositionally biased region" description="Polar residues" evidence="3">
    <location>
        <begin position="219"/>
        <end position="228"/>
    </location>
</feature>
<feature type="compositionally biased region" description="Basic and acidic residues" evidence="3">
    <location>
        <begin position="229"/>
        <end position="238"/>
    </location>
</feature>
<feature type="compositionally biased region" description="Polar residues" evidence="3">
    <location>
        <begin position="239"/>
        <end position="253"/>
    </location>
</feature>
<feature type="compositionally biased region" description="Basic and acidic residues" evidence="3">
    <location>
        <begin position="259"/>
        <end position="315"/>
    </location>
</feature>
<feature type="compositionally biased region" description="Polar residues" evidence="3">
    <location>
        <begin position="316"/>
        <end position="325"/>
    </location>
</feature>
<feature type="compositionally biased region" description="Basic and acidic residues" evidence="3">
    <location>
        <begin position="327"/>
        <end position="347"/>
    </location>
</feature>
<feature type="compositionally biased region" description="Basic and acidic residues" evidence="3">
    <location>
        <begin position="354"/>
        <end position="385"/>
    </location>
</feature>
<feature type="binding site" evidence="2">
    <location>
        <begin position="546"/>
        <end position="553"/>
    </location>
    <ligand>
        <name>GTP</name>
        <dbReference type="ChEBI" id="CHEBI:37565"/>
    </ligand>
</feature>
<feature type="binding site" evidence="2">
    <location>
        <begin position="592"/>
        <end position="596"/>
    </location>
    <ligand>
        <name>GTP</name>
        <dbReference type="ChEBI" id="CHEBI:37565"/>
    </ligand>
</feature>
<feature type="binding site" evidence="2">
    <location>
        <begin position="646"/>
        <end position="649"/>
    </location>
    <ligand>
        <name>GTP</name>
        <dbReference type="ChEBI" id="CHEBI:37565"/>
    </ligand>
</feature>
<gene>
    <name evidence="2" type="primary">infB</name>
    <name type="ordered locus">Cthe_0991</name>
</gene>
<comment type="function">
    <text evidence="2">One of the essential components for the initiation of protein synthesis. Protects formylmethionyl-tRNA from spontaneous hydrolysis and promotes its binding to the 30S ribosomal subunits. Also involved in the hydrolysis of GTP during the formation of the 70S ribosomal complex.</text>
</comment>
<comment type="subcellular location">
    <subcellularLocation>
        <location evidence="2">Cytoplasm</location>
    </subcellularLocation>
</comment>
<comment type="similarity">
    <text evidence="2">Belongs to the TRAFAC class translation factor GTPase superfamily. Classic translation factor GTPase family. IF-2 subfamily.</text>
</comment>
<dbReference type="EMBL" id="CP000568">
    <property type="protein sequence ID" value="ABN52223.1"/>
    <property type="molecule type" value="Genomic_DNA"/>
</dbReference>
<dbReference type="SMR" id="A3DE44"/>
<dbReference type="STRING" id="203119.Cthe_0991"/>
<dbReference type="KEGG" id="cth:Cthe_0991"/>
<dbReference type="eggNOG" id="COG0532">
    <property type="taxonomic scope" value="Bacteria"/>
</dbReference>
<dbReference type="HOGENOM" id="CLU_006301_5_1_9"/>
<dbReference type="Proteomes" id="UP000002145">
    <property type="component" value="Chromosome"/>
</dbReference>
<dbReference type="GO" id="GO:0005829">
    <property type="term" value="C:cytosol"/>
    <property type="evidence" value="ECO:0007669"/>
    <property type="project" value="TreeGrafter"/>
</dbReference>
<dbReference type="GO" id="GO:0005525">
    <property type="term" value="F:GTP binding"/>
    <property type="evidence" value="ECO:0007669"/>
    <property type="project" value="UniProtKB-KW"/>
</dbReference>
<dbReference type="GO" id="GO:0003924">
    <property type="term" value="F:GTPase activity"/>
    <property type="evidence" value="ECO:0007669"/>
    <property type="project" value="UniProtKB-UniRule"/>
</dbReference>
<dbReference type="GO" id="GO:0003743">
    <property type="term" value="F:translation initiation factor activity"/>
    <property type="evidence" value="ECO:0007669"/>
    <property type="project" value="UniProtKB-UniRule"/>
</dbReference>
<dbReference type="CDD" id="cd01887">
    <property type="entry name" value="IF2_eIF5B"/>
    <property type="match status" value="1"/>
</dbReference>
<dbReference type="CDD" id="cd03702">
    <property type="entry name" value="IF2_mtIF2_II"/>
    <property type="match status" value="1"/>
</dbReference>
<dbReference type="CDD" id="cd03692">
    <property type="entry name" value="mtIF2_IVc"/>
    <property type="match status" value="1"/>
</dbReference>
<dbReference type="FunFam" id="2.40.30.10:FF:000007">
    <property type="entry name" value="Translation initiation factor IF-2"/>
    <property type="match status" value="1"/>
</dbReference>
<dbReference type="FunFam" id="2.40.30.10:FF:000008">
    <property type="entry name" value="Translation initiation factor IF-2"/>
    <property type="match status" value="1"/>
</dbReference>
<dbReference type="FunFam" id="3.40.50.10050:FF:000001">
    <property type="entry name" value="Translation initiation factor IF-2"/>
    <property type="match status" value="1"/>
</dbReference>
<dbReference type="FunFam" id="3.40.50.300:FF:000019">
    <property type="entry name" value="Translation initiation factor IF-2"/>
    <property type="match status" value="1"/>
</dbReference>
<dbReference type="Gene3D" id="1.10.10.2480">
    <property type="match status" value="1"/>
</dbReference>
<dbReference type="Gene3D" id="3.40.50.300">
    <property type="entry name" value="P-loop containing nucleotide triphosphate hydrolases"/>
    <property type="match status" value="1"/>
</dbReference>
<dbReference type="Gene3D" id="2.40.30.10">
    <property type="entry name" value="Translation factors"/>
    <property type="match status" value="2"/>
</dbReference>
<dbReference type="Gene3D" id="3.40.50.10050">
    <property type="entry name" value="Translation initiation factor IF- 2, domain 3"/>
    <property type="match status" value="1"/>
</dbReference>
<dbReference type="HAMAP" id="MF_00100_B">
    <property type="entry name" value="IF_2_B"/>
    <property type="match status" value="1"/>
</dbReference>
<dbReference type="InterPro" id="IPR053905">
    <property type="entry name" value="EF-G-like_DII"/>
</dbReference>
<dbReference type="InterPro" id="IPR004161">
    <property type="entry name" value="EFTu-like_2"/>
</dbReference>
<dbReference type="InterPro" id="IPR044145">
    <property type="entry name" value="IF2_II"/>
</dbReference>
<dbReference type="InterPro" id="IPR006847">
    <property type="entry name" value="IF2_N"/>
</dbReference>
<dbReference type="InterPro" id="IPR027417">
    <property type="entry name" value="P-loop_NTPase"/>
</dbReference>
<dbReference type="InterPro" id="IPR005225">
    <property type="entry name" value="Small_GTP-bd"/>
</dbReference>
<dbReference type="InterPro" id="IPR000795">
    <property type="entry name" value="T_Tr_GTP-bd_dom"/>
</dbReference>
<dbReference type="InterPro" id="IPR000178">
    <property type="entry name" value="TF_IF2_bacterial-like"/>
</dbReference>
<dbReference type="InterPro" id="IPR015760">
    <property type="entry name" value="TIF_IF2"/>
</dbReference>
<dbReference type="InterPro" id="IPR023115">
    <property type="entry name" value="TIF_IF2_dom3"/>
</dbReference>
<dbReference type="InterPro" id="IPR036925">
    <property type="entry name" value="TIF_IF2_dom3_sf"/>
</dbReference>
<dbReference type="InterPro" id="IPR009000">
    <property type="entry name" value="Transl_B-barrel_sf"/>
</dbReference>
<dbReference type="NCBIfam" id="TIGR00487">
    <property type="entry name" value="IF-2"/>
    <property type="match status" value="1"/>
</dbReference>
<dbReference type="NCBIfam" id="TIGR00231">
    <property type="entry name" value="small_GTP"/>
    <property type="match status" value="1"/>
</dbReference>
<dbReference type="PANTHER" id="PTHR43381:SF5">
    <property type="entry name" value="TR-TYPE G DOMAIN-CONTAINING PROTEIN"/>
    <property type="match status" value="1"/>
</dbReference>
<dbReference type="PANTHER" id="PTHR43381">
    <property type="entry name" value="TRANSLATION INITIATION FACTOR IF-2-RELATED"/>
    <property type="match status" value="1"/>
</dbReference>
<dbReference type="Pfam" id="PF22042">
    <property type="entry name" value="EF-G_D2"/>
    <property type="match status" value="1"/>
</dbReference>
<dbReference type="Pfam" id="PF00009">
    <property type="entry name" value="GTP_EFTU"/>
    <property type="match status" value="1"/>
</dbReference>
<dbReference type="Pfam" id="PF03144">
    <property type="entry name" value="GTP_EFTU_D2"/>
    <property type="match status" value="1"/>
</dbReference>
<dbReference type="Pfam" id="PF11987">
    <property type="entry name" value="IF-2"/>
    <property type="match status" value="1"/>
</dbReference>
<dbReference type="Pfam" id="PF04760">
    <property type="entry name" value="IF2_N"/>
    <property type="match status" value="2"/>
</dbReference>
<dbReference type="PRINTS" id="PR00449">
    <property type="entry name" value="RASTRNSFRMNG"/>
</dbReference>
<dbReference type="SUPFAM" id="SSF52156">
    <property type="entry name" value="Initiation factor IF2/eIF5b, domain 3"/>
    <property type="match status" value="1"/>
</dbReference>
<dbReference type="SUPFAM" id="SSF52540">
    <property type="entry name" value="P-loop containing nucleoside triphosphate hydrolases"/>
    <property type="match status" value="1"/>
</dbReference>
<dbReference type="SUPFAM" id="SSF50447">
    <property type="entry name" value="Translation proteins"/>
    <property type="match status" value="2"/>
</dbReference>
<dbReference type="PROSITE" id="PS51722">
    <property type="entry name" value="G_TR_2"/>
    <property type="match status" value="1"/>
</dbReference>
<dbReference type="PROSITE" id="PS01176">
    <property type="entry name" value="IF2"/>
    <property type="match status" value="1"/>
</dbReference>
<reference key="1">
    <citation type="submission" date="2007-02" db="EMBL/GenBank/DDBJ databases">
        <title>Complete sequence of Clostridium thermocellum ATCC 27405.</title>
        <authorList>
            <consortium name="US DOE Joint Genome Institute"/>
            <person name="Copeland A."/>
            <person name="Lucas S."/>
            <person name="Lapidus A."/>
            <person name="Barry K."/>
            <person name="Detter J.C."/>
            <person name="Glavina del Rio T."/>
            <person name="Hammon N."/>
            <person name="Israni S."/>
            <person name="Dalin E."/>
            <person name="Tice H."/>
            <person name="Pitluck S."/>
            <person name="Chertkov O."/>
            <person name="Brettin T."/>
            <person name="Bruce D."/>
            <person name="Han C."/>
            <person name="Tapia R."/>
            <person name="Gilna P."/>
            <person name="Schmutz J."/>
            <person name="Larimer F."/>
            <person name="Land M."/>
            <person name="Hauser L."/>
            <person name="Kyrpides N."/>
            <person name="Mikhailova N."/>
            <person name="Wu J.H.D."/>
            <person name="Newcomb M."/>
            <person name="Richardson P."/>
        </authorList>
    </citation>
    <scope>NUCLEOTIDE SEQUENCE [LARGE SCALE GENOMIC DNA]</scope>
    <source>
        <strain>ATCC 27405 / DSM 1237 / JCM 9322 / NBRC 103400 / NCIMB 10682 / NRRL B-4536 / VPI 7372</strain>
    </source>
</reference>